<name>SC221_ARATH</name>
<feature type="chain" id="PRO_0000206747" description="25.3 kDa vesicle transport protein SEC22-1">
    <location>
        <begin position="1"/>
        <end position="218"/>
    </location>
</feature>
<feature type="topological domain" description="Cytoplasmic" evidence="2">
    <location>
        <begin position="1"/>
        <end position="192"/>
    </location>
</feature>
<feature type="transmembrane region" description="Helical; Anchor for type IV membrane protein" evidence="2">
    <location>
        <begin position="193"/>
        <end position="213"/>
    </location>
</feature>
<feature type="topological domain" description="Vesicular" evidence="2">
    <location>
        <begin position="214"/>
        <end position="218"/>
    </location>
</feature>
<feature type="domain" description="Longin" evidence="3">
    <location>
        <begin position="6"/>
        <end position="120"/>
    </location>
</feature>
<feature type="domain" description="v-SNARE coiled-coil homology" evidence="4">
    <location>
        <begin position="135"/>
        <end position="195"/>
    </location>
</feature>
<protein>
    <recommendedName>
        <fullName evidence="9">25.3 kDa vesicle transport protein SEC22-1</fullName>
        <shortName evidence="8 9">AtSEC22</shortName>
    </recommendedName>
</protein>
<accession>Q94AU2</accession>
<accession>O65393</accession>
<sequence>MVKMTLIARVTDGLPLAEGLDDGRDLPDSDMYKQQVKALFKNLSRGQNDASRMSVETGPYVFHYIIEGRVCYLTMCDRSYPKKLAFQYLEDLKNEFERVNGPNIETAARPYAFIKFDTFIQKTKKLYQDTRTQRNIAKLNDELYEVHQIMTRNVQEVLGVGEKLDQVSEMSSRLTSESRIYADKAKDLNRQALIRKWAPVAIVFGVVFLLFWVKNKLW</sequence>
<keyword id="KW-0175">Coiled coil</keyword>
<keyword id="KW-0256">Endoplasmic reticulum</keyword>
<keyword id="KW-0333">Golgi apparatus</keyword>
<keyword id="KW-0472">Membrane</keyword>
<keyword id="KW-0653">Protein transport</keyword>
<keyword id="KW-1185">Reference proteome</keyword>
<keyword id="KW-0812">Transmembrane</keyword>
<keyword id="KW-1133">Transmembrane helix</keyword>
<keyword id="KW-0813">Transport</keyword>
<proteinExistence type="evidence at protein level"/>
<dbReference type="EMBL" id="AC002131">
    <property type="protein sequence ID" value="AAC17634.1"/>
    <property type="status" value="ALT_SEQ"/>
    <property type="molecule type" value="Genomic_DNA"/>
</dbReference>
<dbReference type="EMBL" id="CP002684">
    <property type="protein sequence ID" value="AEE28809.1"/>
    <property type="molecule type" value="Genomic_DNA"/>
</dbReference>
<dbReference type="EMBL" id="AY045795">
    <property type="protein sequence ID" value="AAK76469.1"/>
    <property type="molecule type" value="mRNA"/>
</dbReference>
<dbReference type="EMBL" id="AY079413">
    <property type="protein sequence ID" value="AAL85144.1"/>
    <property type="molecule type" value="mRNA"/>
</dbReference>
<dbReference type="EMBL" id="AY086749">
    <property type="protein sequence ID" value="AAM63800.1"/>
    <property type="molecule type" value="mRNA"/>
</dbReference>
<dbReference type="PIR" id="C86253">
    <property type="entry name" value="C86253"/>
</dbReference>
<dbReference type="RefSeq" id="NP_172653.1">
    <property type="nucleotide sequence ID" value="NM_101060.4"/>
</dbReference>
<dbReference type="SMR" id="Q94AU2"/>
<dbReference type="BioGRID" id="22977">
    <property type="interactions" value="10"/>
</dbReference>
<dbReference type="FunCoup" id="Q94AU2">
    <property type="interactions" value="4466"/>
</dbReference>
<dbReference type="IntAct" id="Q94AU2">
    <property type="interactions" value="10"/>
</dbReference>
<dbReference type="STRING" id="3702.Q94AU2"/>
<dbReference type="PaxDb" id="3702-AT1G11890.1"/>
<dbReference type="ProteomicsDB" id="232829"/>
<dbReference type="EnsemblPlants" id="AT1G11890.1">
    <property type="protein sequence ID" value="AT1G11890.1"/>
    <property type="gene ID" value="AT1G11890"/>
</dbReference>
<dbReference type="GeneID" id="837737"/>
<dbReference type="Gramene" id="AT1G11890.1">
    <property type="protein sequence ID" value="AT1G11890.1"/>
    <property type="gene ID" value="AT1G11890"/>
</dbReference>
<dbReference type="KEGG" id="ath:AT1G11890"/>
<dbReference type="Araport" id="AT1G11890"/>
<dbReference type="TAIR" id="AT1G11890">
    <property type="gene designation" value="SEC22"/>
</dbReference>
<dbReference type="eggNOG" id="KOG0862">
    <property type="taxonomic scope" value="Eukaryota"/>
</dbReference>
<dbReference type="HOGENOM" id="CLU_054453_4_1_1"/>
<dbReference type="InParanoid" id="Q94AU2"/>
<dbReference type="OMA" id="FIYWRFF"/>
<dbReference type="PhylomeDB" id="Q94AU2"/>
<dbReference type="PRO" id="PR:Q94AU2"/>
<dbReference type="Proteomes" id="UP000006548">
    <property type="component" value="Chromosome 1"/>
</dbReference>
<dbReference type="ExpressionAtlas" id="Q94AU2">
    <property type="expression patterns" value="baseline and differential"/>
</dbReference>
<dbReference type="GO" id="GO:0005783">
    <property type="term" value="C:endoplasmic reticulum"/>
    <property type="evidence" value="ECO:0000314"/>
    <property type="project" value="TAIR"/>
</dbReference>
<dbReference type="GO" id="GO:0005789">
    <property type="term" value="C:endoplasmic reticulum membrane"/>
    <property type="evidence" value="ECO:0000314"/>
    <property type="project" value="UniProtKB"/>
</dbReference>
<dbReference type="GO" id="GO:0005576">
    <property type="term" value="C:extracellular region"/>
    <property type="evidence" value="ECO:0007005"/>
    <property type="project" value="TAIR"/>
</dbReference>
<dbReference type="GO" id="GO:0005794">
    <property type="term" value="C:Golgi apparatus"/>
    <property type="evidence" value="ECO:0000314"/>
    <property type="project" value="TAIR"/>
</dbReference>
<dbReference type="GO" id="GO:0000139">
    <property type="term" value="C:Golgi membrane"/>
    <property type="evidence" value="ECO:0007669"/>
    <property type="project" value="UniProtKB-SubCell"/>
</dbReference>
<dbReference type="GO" id="GO:0005886">
    <property type="term" value="C:plasma membrane"/>
    <property type="evidence" value="ECO:0007005"/>
    <property type="project" value="TAIR"/>
</dbReference>
<dbReference type="GO" id="GO:0005484">
    <property type="term" value="F:SNAP receptor activity"/>
    <property type="evidence" value="ECO:0007669"/>
    <property type="project" value="InterPro"/>
</dbReference>
<dbReference type="GO" id="GO:0009553">
    <property type="term" value="P:embryo sac development"/>
    <property type="evidence" value="ECO:0000315"/>
    <property type="project" value="UniProtKB"/>
</dbReference>
<dbReference type="GO" id="GO:0007029">
    <property type="term" value="P:endoplasmic reticulum organization"/>
    <property type="evidence" value="ECO:0000315"/>
    <property type="project" value="UniProtKB"/>
</dbReference>
<dbReference type="GO" id="GO:0006888">
    <property type="term" value="P:endoplasmic reticulum to Golgi vesicle-mediated transport"/>
    <property type="evidence" value="ECO:0000315"/>
    <property type="project" value="UniProtKB"/>
</dbReference>
<dbReference type="GO" id="GO:0048229">
    <property type="term" value="P:gametophyte development"/>
    <property type="evidence" value="ECO:0000315"/>
    <property type="project" value="UniProtKB"/>
</dbReference>
<dbReference type="GO" id="GO:0007030">
    <property type="term" value="P:Golgi organization"/>
    <property type="evidence" value="ECO:0000315"/>
    <property type="project" value="UniProtKB"/>
</dbReference>
<dbReference type="GO" id="GO:0009555">
    <property type="term" value="P:pollen development"/>
    <property type="evidence" value="ECO:0000315"/>
    <property type="project" value="UniProtKB"/>
</dbReference>
<dbReference type="GO" id="GO:0015031">
    <property type="term" value="P:protein transport"/>
    <property type="evidence" value="ECO:0007669"/>
    <property type="project" value="UniProtKB-KW"/>
</dbReference>
<dbReference type="GO" id="GO:0006890">
    <property type="term" value="P:retrograde vesicle-mediated transport, Golgi to endoplasmic reticulum"/>
    <property type="evidence" value="ECO:0007669"/>
    <property type="project" value="InterPro"/>
</dbReference>
<dbReference type="CDD" id="cd14824">
    <property type="entry name" value="Longin"/>
    <property type="match status" value="1"/>
</dbReference>
<dbReference type="CDD" id="cd15866">
    <property type="entry name" value="R-SNARE_SEC22"/>
    <property type="match status" value="1"/>
</dbReference>
<dbReference type="FunFam" id="1.20.5.110:FF:000028">
    <property type="entry name" value="25.3 kDa vesicle transport protein-like"/>
    <property type="match status" value="1"/>
</dbReference>
<dbReference type="FunFam" id="3.30.450.50:FF:000003">
    <property type="entry name" value="25.3 kDa vesicle transport protein-like"/>
    <property type="match status" value="1"/>
</dbReference>
<dbReference type="Gene3D" id="1.20.5.110">
    <property type="match status" value="1"/>
</dbReference>
<dbReference type="Gene3D" id="3.30.450.50">
    <property type="entry name" value="Longin domain"/>
    <property type="match status" value="1"/>
</dbReference>
<dbReference type="InterPro" id="IPR011012">
    <property type="entry name" value="Longin-like_dom_sf"/>
</dbReference>
<dbReference type="InterPro" id="IPR010908">
    <property type="entry name" value="Longin_dom"/>
</dbReference>
<dbReference type="InterPro" id="IPR044565">
    <property type="entry name" value="Sec22"/>
</dbReference>
<dbReference type="InterPro" id="IPR042855">
    <property type="entry name" value="V_SNARE_CC"/>
</dbReference>
<dbReference type="PANTHER" id="PTHR45837">
    <property type="entry name" value="VESICLE-TRAFFICKING PROTEIN SEC22B"/>
    <property type="match status" value="1"/>
</dbReference>
<dbReference type="Pfam" id="PF13774">
    <property type="entry name" value="Longin"/>
    <property type="match status" value="1"/>
</dbReference>
<dbReference type="Pfam" id="PF00957">
    <property type="entry name" value="Synaptobrevin"/>
    <property type="match status" value="1"/>
</dbReference>
<dbReference type="SMART" id="SM01270">
    <property type="entry name" value="Longin"/>
    <property type="match status" value="1"/>
</dbReference>
<dbReference type="SUPFAM" id="SSF58038">
    <property type="entry name" value="SNARE fusion complex"/>
    <property type="match status" value="1"/>
</dbReference>
<dbReference type="SUPFAM" id="SSF64356">
    <property type="entry name" value="SNARE-like"/>
    <property type="match status" value="1"/>
</dbReference>
<dbReference type="PROSITE" id="PS50859">
    <property type="entry name" value="LONGIN"/>
    <property type="match status" value="1"/>
</dbReference>
<dbReference type="PROSITE" id="PS50892">
    <property type="entry name" value="V_SNARE"/>
    <property type="match status" value="1"/>
</dbReference>
<reference key="1">
    <citation type="journal article" date="2000" name="Nature">
        <title>Sequence and analysis of chromosome 1 of the plant Arabidopsis thaliana.</title>
        <authorList>
            <person name="Theologis A."/>
            <person name="Ecker J.R."/>
            <person name="Palm C.J."/>
            <person name="Federspiel N.A."/>
            <person name="Kaul S."/>
            <person name="White O."/>
            <person name="Alonso J."/>
            <person name="Altafi H."/>
            <person name="Araujo R."/>
            <person name="Bowman C.L."/>
            <person name="Brooks S.Y."/>
            <person name="Buehler E."/>
            <person name="Chan A."/>
            <person name="Chao Q."/>
            <person name="Chen H."/>
            <person name="Cheuk R.F."/>
            <person name="Chin C.W."/>
            <person name="Chung M.K."/>
            <person name="Conn L."/>
            <person name="Conway A.B."/>
            <person name="Conway A.R."/>
            <person name="Creasy T.H."/>
            <person name="Dewar K."/>
            <person name="Dunn P."/>
            <person name="Etgu P."/>
            <person name="Feldblyum T.V."/>
            <person name="Feng J.-D."/>
            <person name="Fong B."/>
            <person name="Fujii C.Y."/>
            <person name="Gill J.E."/>
            <person name="Goldsmith A.D."/>
            <person name="Haas B."/>
            <person name="Hansen N.F."/>
            <person name="Hughes B."/>
            <person name="Huizar L."/>
            <person name="Hunter J.L."/>
            <person name="Jenkins J."/>
            <person name="Johnson-Hopson C."/>
            <person name="Khan S."/>
            <person name="Khaykin E."/>
            <person name="Kim C.J."/>
            <person name="Koo H.L."/>
            <person name="Kremenetskaia I."/>
            <person name="Kurtz D.B."/>
            <person name="Kwan A."/>
            <person name="Lam B."/>
            <person name="Langin-Hooper S."/>
            <person name="Lee A."/>
            <person name="Lee J.M."/>
            <person name="Lenz C.A."/>
            <person name="Li J.H."/>
            <person name="Li Y.-P."/>
            <person name="Lin X."/>
            <person name="Liu S.X."/>
            <person name="Liu Z.A."/>
            <person name="Luros J.S."/>
            <person name="Maiti R."/>
            <person name="Marziali A."/>
            <person name="Militscher J."/>
            <person name="Miranda M."/>
            <person name="Nguyen M."/>
            <person name="Nierman W.C."/>
            <person name="Osborne B.I."/>
            <person name="Pai G."/>
            <person name="Peterson J."/>
            <person name="Pham P.K."/>
            <person name="Rizzo M."/>
            <person name="Rooney T."/>
            <person name="Rowley D."/>
            <person name="Sakano H."/>
            <person name="Salzberg S.L."/>
            <person name="Schwartz J.R."/>
            <person name="Shinn P."/>
            <person name="Southwick A.M."/>
            <person name="Sun H."/>
            <person name="Tallon L.J."/>
            <person name="Tambunga G."/>
            <person name="Toriumi M.J."/>
            <person name="Town C.D."/>
            <person name="Utterback T."/>
            <person name="Van Aken S."/>
            <person name="Vaysberg M."/>
            <person name="Vysotskaia V.S."/>
            <person name="Walker M."/>
            <person name="Wu D."/>
            <person name="Yu G."/>
            <person name="Fraser C.M."/>
            <person name="Venter J.C."/>
            <person name="Davis R.W."/>
        </authorList>
    </citation>
    <scope>NUCLEOTIDE SEQUENCE [LARGE SCALE GENOMIC DNA]</scope>
    <source>
        <strain>cv. Columbia</strain>
    </source>
</reference>
<reference key="2">
    <citation type="journal article" date="2017" name="Plant J.">
        <title>Araport11: a complete reannotation of the Arabidopsis thaliana reference genome.</title>
        <authorList>
            <person name="Cheng C.Y."/>
            <person name="Krishnakumar V."/>
            <person name="Chan A.P."/>
            <person name="Thibaud-Nissen F."/>
            <person name="Schobel S."/>
            <person name="Town C.D."/>
        </authorList>
    </citation>
    <scope>GENOME REANNOTATION</scope>
    <source>
        <strain>cv. Columbia</strain>
    </source>
</reference>
<reference key="3">
    <citation type="journal article" date="2003" name="Science">
        <title>Empirical analysis of transcriptional activity in the Arabidopsis genome.</title>
        <authorList>
            <person name="Yamada K."/>
            <person name="Lim J."/>
            <person name="Dale J.M."/>
            <person name="Chen H."/>
            <person name="Shinn P."/>
            <person name="Palm C.J."/>
            <person name="Southwick A.M."/>
            <person name="Wu H.C."/>
            <person name="Kim C.J."/>
            <person name="Nguyen M."/>
            <person name="Pham P.K."/>
            <person name="Cheuk R.F."/>
            <person name="Karlin-Newmann G."/>
            <person name="Liu S.X."/>
            <person name="Lam B."/>
            <person name="Sakano H."/>
            <person name="Wu T."/>
            <person name="Yu G."/>
            <person name="Miranda M."/>
            <person name="Quach H.L."/>
            <person name="Tripp M."/>
            <person name="Chang C.H."/>
            <person name="Lee J.M."/>
            <person name="Toriumi M.J."/>
            <person name="Chan M.M."/>
            <person name="Tang C.C."/>
            <person name="Onodera C.S."/>
            <person name="Deng J.M."/>
            <person name="Akiyama K."/>
            <person name="Ansari Y."/>
            <person name="Arakawa T."/>
            <person name="Banh J."/>
            <person name="Banno F."/>
            <person name="Bowser L."/>
            <person name="Brooks S.Y."/>
            <person name="Carninci P."/>
            <person name="Chao Q."/>
            <person name="Choy N."/>
            <person name="Enju A."/>
            <person name="Goldsmith A.D."/>
            <person name="Gurjal M."/>
            <person name="Hansen N.F."/>
            <person name="Hayashizaki Y."/>
            <person name="Johnson-Hopson C."/>
            <person name="Hsuan V.W."/>
            <person name="Iida K."/>
            <person name="Karnes M."/>
            <person name="Khan S."/>
            <person name="Koesema E."/>
            <person name="Ishida J."/>
            <person name="Jiang P.X."/>
            <person name="Jones T."/>
            <person name="Kawai J."/>
            <person name="Kamiya A."/>
            <person name="Meyers C."/>
            <person name="Nakajima M."/>
            <person name="Narusaka M."/>
            <person name="Seki M."/>
            <person name="Sakurai T."/>
            <person name="Satou M."/>
            <person name="Tamse R."/>
            <person name="Vaysberg M."/>
            <person name="Wallender E.K."/>
            <person name="Wong C."/>
            <person name="Yamamura Y."/>
            <person name="Yuan S."/>
            <person name="Shinozaki K."/>
            <person name="Davis R.W."/>
            <person name="Theologis A."/>
            <person name="Ecker J.R."/>
        </authorList>
    </citation>
    <scope>NUCLEOTIDE SEQUENCE [LARGE SCALE MRNA]</scope>
    <source>
        <strain>cv. Columbia</strain>
    </source>
</reference>
<reference key="4">
    <citation type="submission" date="2002-03" db="EMBL/GenBank/DDBJ databases">
        <title>Full-length cDNA from Arabidopsis thaliana.</title>
        <authorList>
            <person name="Brover V.V."/>
            <person name="Troukhan M.E."/>
            <person name="Alexandrov N.A."/>
            <person name="Lu Y.-P."/>
            <person name="Flavell R.B."/>
            <person name="Feldmann K.A."/>
        </authorList>
    </citation>
    <scope>NUCLEOTIDE SEQUENCE [LARGE SCALE MRNA]</scope>
</reference>
<reference key="5">
    <citation type="journal article" date="2011" name="Plant J.">
        <title>Arabidopsis SNARE protein SEC22 is essential for gametophyte development and maintenance of Golgi-stack integrity.</title>
        <authorList>
            <person name="El-Kasmi F."/>
            <person name="Pacher T."/>
            <person name="Strompen G."/>
            <person name="Stierhof Y.-D."/>
            <person name="Mueller L.M."/>
            <person name="Koncz C."/>
            <person name="Mayer U."/>
            <person name="Juergens G."/>
        </authorList>
    </citation>
    <scope>FUNCTION</scope>
    <scope>DISRUPTION PHENOTYPE</scope>
    <scope>SUBCELLULAR LOCATION</scope>
    <scope>TISSUE SPECIFICITY</scope>
    <scope>DEVELOPMENTAL STAGE</scope>
    <source>
        <strain>cv. Columbia</strain>
        <strain>cv. Landsberg erecta</strain>
    </source>
</reference>
<reference key="6">
    <citation type="journal article" date="2013" name="Nat. Commun.">
        <title>Caesium accumulation in yeast and plants is selectively repressed by loss of the SNARE Sec22p/SEC22.</title>
        <authorList>
            <person name="Draexl S."/>
            <person name="Mueller J."/>
            <person name="Li W.B."/>
            <person name="Michalke B."/>
            <person name="Scherb H."/>
            <person name="Hense B.A."/>
            <person name="Tschiersch J."/>
            <person name="Kanter U."/>
            <person name="Schaeffner A.R."/>
        </authorList>
    </citation>
    <scope>FUNCTION</scope>
    <scope>DISRUPTION PHENOTYPE</scope>
    <source>
        <strain>cv. Columbia</strain>
    </source>
</reference>
<reference key="7">
    <citation type="journal article" date="2014" name="Plant Physiol.">
        <title>Endomembrane trafficking protein SEC24A regulates cell size patterning in Arabidopsis.</title>
        <authorList>
            <person name="Qu X."/>
            <person name="Chatty P.R."/>
            <person name="Roeder A.H.K."/>
        </authorList>
    </citation>
    <scope>INTERACTION WITH SEC24A</scope>
    <scope>GENE FAMILY</scope>
    <source>
        <strain>cv. Landsberg erecta</strain>
    </source>
</reference>
<gene>
    <name evidence="9" type="primary">SEC221</name>
    <name evidence="8 9" type="synonym">SEC22</name>
    <name evidence="11" type="ordered locus">At1g11890</name>
    <name evidence="12" type="ORF">F12F1.27</name>
</gene>
<evidence type="ECO:0000250" key="1">
    <source>
        <dbReference type="UniProtKB" id="P22214"/>
    </source>
</evidence>
<evidence type="ECO:0000255" key="2"/>
<evidence type="ECO:0000255" key="3">
    <source>
        <dbReference type="PROSITE-ProRule" id="PRU00231"/>
    </source>
</evidence>
<evidence type="ECO:0000255" key="4">
    <source>
        <dbReference type="PROSITE-ProRule" id="PRU00290"/>
    </source>
</evidence>
<evidence type="ECO:0000269" key="5">
    <source>
    </source>
</evidence>
<evidence type="ECO:0000269" key="6">
    <source>
    </source>
</evidence>
<evidence type="ECO:0000269" key="7">
    <source>
    </source>
</evidence>
<evidence type="ECO:0000303" key="8">
    <source>
    </source>
</evidence>
<evidence type="ECO:0000303" key="9">
    <source>
    </source>
</evidence>
<evidence type="ECO:0000305" key="10"/>
<evidence type="ECO:0000312" key="11">
    <source>
        <dbReference type="Araport" id="AT1G11890"/>
    </source>
</evidence>
<evidence type="ECO:0000312" key="12">
    <source>
        <dbReference type="EMBL" id="AAC17634.1"/>
    </source>
</evidence>
<organism>
    <name type="scientific">Arabidopsis thaliana</name>
    <name type="common">Mouse-ear cress</name>
    <dbReference type="NCBI Taxonomy" id="3702"/>
    <lineage>
        <taxon>Eukaryota</taxon>
        <taxon>Viridiplantae</taxon>
        <taxon>Streptophyta</taxon>
        <taxon>Embryophyta</taxon>
        <taxon>Tracheophyta</taxon>
        <taxon>Spermatophyta</taxon>
        <taxon>Magnoliopsida</taxon>
        <taxon>eudicotyledons</taxon>
        <taxon>Gunneridae</taxon>
        <taxon>Pentapetalae</taxon>
        <taxon>rosids</taxon>
        <taxon>malvids</taxon>
        <taxon>Brassicales</taxon>
        <taxon>Brassicaceae</taxon>
        <taxon>Camelineae</taxon>
        <taxon>Arabidopsis</taxon>
    </lineage>
</organism>
<comment type="function">
    <text evidence="5 6">V-SNARE involved in vesicle trafficking from the ER to the Golgi complex and required for early secretion (PubMed:21205036). Involved in endoplasmic reticulum (ER) biogenesis and functions as well as for Golgi-stack integrity (PubMed:21205036). Essential for gametophytes development (PubMed:21205036). Involved in cesium Cs(+) accumulation, a non-essential cation (PubMed:23817436).</text>
</comment>
<comment type="subunit">
    <text evidence="7">Interacts with SEC24A.</text>
</comment>
<comment type="subcellular location">
    <subcellularLocation>
        <location evidence="1">Golgi apparatus membrane</location>
        <topology evidence="1">Single-pass type IV membrane protein</topology>
    </subcellularLocation>
    <subcellularLocation>
        <location evidence="5">Endoplasmic reticulum membrane</location>
        <topology evidence="5">Single-pass type IV membrane protein</topology>
    </subcellularLocation>
</comment>
<comment type="tissue specificity">
    <text evidence="5">Mainly expressed in flowers and siliques, to a lower extent in seedlings, and barely in roots and leaves.</text>
</comment>
<comment type="developmental stage">
    <text evidence="5">In flowers, mostly present in developing and mature male gametophytes and in the endosperm.</text>
</comment>
<comment type="disruption phenotype">
    <text evidence="5 6">In sec22-1 and sec22-2, impaired gametophytes development (PubMed:21205036). Morphological disruption of the endoplasmic reticulum (ER) as well as Golgi fragmentation and consumption in pollen grains (PubMed:21205036). Abnormal pollen development during the bicellular stage, eventually giving rise to degenerated pollen grains (PubMed:21205036). Altered embryogenesis in embryo sacs leading to unfused polar nuclei in their central cell (PubMed:21205036). Repressed cesium Cs(+) uptake and accumulation (PubMed:23817436).</text>
</comment>
<comment type="similarity">
    <text evidence="10">Belongs to the synaptobrevin family.</text>
</comment>
<comment type="sequence caution" evidence="10">
    <conflict type="erroneous gene model prediction">
        <sequence resource="EMBL-CDS" id="AAC17634"/>
    </conflict>
</comment>